<sequence>MSAVDKTNNLPTLDTLQMVISDVDGTLLDKHHRFHFRTYRAMKYIREKYPNFPIVLATGKQRSAVDLIRIPLDLDAFPAAHVNGCVLYNKGKIVYADHLKPEVVMEVVEATKGNPNIANVVYDEHYVYALTPGREDMKNVKRLAEIGEKVDFSMPCEEAIEKVKSGEIKVIKMAVCEDPDKLDVVRDILGKFPREKFATTQALEFCIELIPSNSNKGTALQYITSNILPEVKNENVISFGDGQNDLSMFAIAGWSVAIKNGMPIAIEKAKAVSRVGNEEGAVGEVLERIFNIPEDYTPPPYTF</sequence>
<feature type="chain" id="PRO_0000339408" description="Uncharacterized hydrolase C25B8.12c">
    <location>
        <begin position="1"/>
        <end position="303"/>
    </location>
</feature>
<feature type="modified residue" description="Phosphoserine" evidence="2">
    <location>
        <position position="63"/>
    </location>
</feature>
<accession>Q9UTA6</accession>
<keyword id="KW-0963">Cytoplasm</keyword>
<keyword id="KW-0378">Hydrolase</keyword>
<keyword id="KW-0539">Nucleus</keyword>
<keyword id="KW-0597">Phosphoprotein</keyword>
<keyword id="KW-1185">Reference proteome</keyword>
<protein>
    <recommendedName>
        <fullName>Uncharacterized hydrolase C25B8.12c</fullName>
        <ecNumber>3.-.-.-</ecNumber>
    </recommendedName>
</protein>
<comment type="subcellular location">
    <subcellularLocation>
        <location evidence="1">Cytoplasm</location>
    </subcellularLocation>
    <subcellularLocation>
        <location evidence="1">Nucleus</location>
    </subcellularLocation>
</comment>
<comment type="similarity">
    <text evidence="3">Belongs to the HAD-like hydrolase superfamily.</text>
</comment>
<gene>
    <name type="ORF">SPAC25B8.12c</name>
</gene>
<organism>
    <name type="scientific">Schizosaccharomyces pombe (strain 972 / ATCC 24843)</name>
    <name type="common">Fission yeast</name>
    <dbReference type="NCBI Taxonomy" id="284812"/>
    <lineage>
        <taxon>Eukaryota</taxon>
        <taxon>Fungi</taxon>
        <taxon>Dikarya</taxon>
        <taxon>Ascomycota</taxon>
        <taxon>Taphrinomycotina</taxon>
        <taxon>Schizosaccharomycetes</taxon>
        <taxon>Schizosaccharomycetales</taxon>
        <taxon>Schizosaccharomycetaceae</taxon>
        <taxon>Schizosaccharomyces</taxon>
    </lineage>
</organism>
<evidence type="ECO:0000269" key="1">
    <source>
    </source>
</evidence>
<evidence type="ECO:0000269" key="2">
    <source>
    </source>
</evidence>
<evidence type="ECO:0000305" key="3"/>
<proteinExistence type="evidence at protein level"/>
<reference key="1">
    <citation type="journal article" date="2002" name="Nature">
        <title>The genome sequence of Schizosaccharomyces pombe.</title>
        <authorList>
            <person name="Wood V."/>
            <person name="Gwilliam R."/>
            <person name="Rajandream M.A."/>
            <person name="Lyne M.H."/>
            <person name="Lyne R."/>
            <person name="Stewart A."/>
            <person name="Sgouros J.G."/>
            <person name="Peat N."/>
            <person name="Hayles J."/>
            <person name="Baker S.G."/>
            <person name="Basham D."/>
            <person name="Bowman S."/>
            <person name="Brooks K."/>
            <person name="Brown D."/>
            <person name="Brown S."/>
            <person name="Chillingworth T."/>
            <person name="Churcher C.M."/>
            <person name="Collins M."/>
            <person name="Connor R."/>
            <person name="Cronin A."/>
            <person name="Davis P."/>
            <person name="Feltwell T."/>
            <person name="Fraser A."/>
            <person name="Gentles S."/>
            <person name="Goble A."/>
            <person name="Hamlin N."/>
            <person name="Harris D.E."/>
            <person name="Hidalgo J."/>
            <person name="Hodgson G."/>
            <person name="Holroyd S."/>
            <person name="Hornsby T."/>
            <person name="Howarth S."/>
            <person name="Huckle E.J."/>
            <person name="Hunt S."/>
            <person name="Jagels K."/>
            <person name="James K.D."/>
            <person name="Jones L."/>
            <person name="Jones M."/>
            <person name="Leather S."/>
            <person name="McDonald S."/>
            <person name="McLean J."/>
            <person name="Mooney P."/>
            <person name="Moule S."/>
            <person name="Mungall K.L."/>
            <person name="Murphy L.D."/>
            <person name="Niblett D."/>
            <person name="Odell C."/>
            <person name="Oliver K."/>
            <person name="O'Neil S."/>
            <person name="Pearson D."/>
            <person name="Quail M.A."/>
            <person name="Rabbinowitsch E."/>
            <person name="Rutherford K.M."/>
            <person name="Rutter S."/>
            <person name="Saunders D."/>
            <person name="Seeger K."/>
            <person name="Sharp S."/>
            <person name="Skelton J."/>
            <person name="Simmonds M.N."/>
            <person name="Squares R."/>
            <person name="Squares S."/>
            <person name="Stevens K."/>
            <person name="Taylor K."/>
            <person name="Taylor R.G."/>
            <person name="Tivey A."/>
            <person name="Walsh S.V."/>
            <person name="Warren T."/>
            <person name="Whitehead S."/>
            <person name="Woodward J.R."/>
            <person name="Volckaert G."/>
            <person name="Aert R."/>
            <person name="Robben J."/>
            <person name="Grymonprez B."/>
            <person name="Weltjens I."/>
            <person name="Vanstreels E."/>
            <person name="Rieger M."/>
            <person name="Schaefer M."/>
            <person name="Mueller-Auer S."/>
            <person name="Gabel C."/>
            <person name="Fuchs M."/>
            <person name="Duesterhoeft A."/>
            <person name="Fritzc C."/>
            <person name="Holzer E."/>
            <person name="Moestl D."/>
            <person name="Hilbert H."/>
            <person name="Borzym K."/>
            <person name="Langer I."/>
            <person name="Beck A."/>
            <person name="Lehrach H."/>
            <person name="Reinhardt R."/>
            <person name="Pohl T.M."/>
            <person name="Eger P."/>
            <person name="Zimmermann W."/>
            <person name="Wedler H."/>
            <person name="Wambutt R."/>
            <person name="Purnelle B."/>
            <person name="Goffeau A."/>
            <person name="Cadieu E."/>
            <person name="Dreano S."/>
            <person name="Gloux S."/>
            <person name="Lelaure V."/>
            <person name="Mottier S."/>
            <person name="Galibert F."/>
            <person name="Aves S.J."/>
            <person name="Xiang Z."/>
            <person name="Hunt C."/>
            <person name="Moore K."/>
            <person name="Hurst S.M."/>
            <person name="Lucas M."/>
            <person name="Rochet M."/>
            <person name="Gaillardin C."/>
            <person name="Tallada V.A."/>
            <person name="Garzon A."/>
            <person name="Thode G."/>
            <person name="Daga R.R."/>
            <person name="Cruzado L."/>
            <person name="Jimenez J."/>
            <person name="Sanchez M."/>
            <person name="del Rey F."/>
            <person name="Benito J."/>
            <person name="Dominguez A."/>
            <person name="Revuelta J.L."/>
            <person name="Moreno S."/>
            <person name="Armstrong J."/>
            <person name="Forsburg S.L."/>
            <person name="Cerutti L."/>
            <person name="Lowe T."/>
            <person name="McCombie W.R."/>
            <person name="Paulsen I."/>
            <person name="Potashkin J."/>
            <person name="Shpakovski G.V."/>
            <person name="Ussery D."/>
            <person name="Barrell B.G."/>
            <person name="Nurse P."/>
        </authorList>
    </citation>
    <scope>NUCLEOTIDE SEQUENCE [LARGE SCALE GENOMIC DNA]</scope>
    <source>
        <strain>972 / ATCC 24843</strain>
    </source>
</reference>
<reference key="2">
    <citation type="journal article" date="2006" name="Nat. Biotechnol.">
        <title>ORFeome cloning and global analysis of protein localization in the fission yeast Schizosaccharomyces pombe.</title>
        <authorList>
            <person name="Matsuyama A."/>
            <person name="Arai R."/>
            <person name="Yashiroda Y."/>
            <person name="Shirai A."/>
            <person name="Kamata A."/>
            <person name="Sekido S."/>
            <person name="Kobayashi Y."/>
            <person name="Hashimoto A."/>
            <person name="Hamamoto M."/>
            <person name="Hiraoka Y."/>
            <person name="Horinouchi S."/>
            <person name="Yoshida M."/>
        </authorList>
    </citation>
    <scope>SUBCELLULAR LOCATION [LARGE SCALE ANALYSIS]</scope>
</reference>
<reference key="3">
    <citation type="journal article" date="2008" name="J. Proteome Res.">
        <title>Phosphoproteome analysis of fission yeast.</title>
        <authorList>
            <person name="Wilson-Grady J.T."/>
            <person name="Villen J."/>
            <person name="Gygi S.P."/>
        </authorList>
    </citation>
    <scope>PHOSPHORYLATION [LARGE SCALE ANALYSIS] AT SER-63</scope>
    <scope>IDENTIFICATION BY MASS SPECTROMETRY</scope>
</reference>
<name>YL8C_SCHPO</name>
<dbReference type="EC" id="3.-.-.-"/>
<dbReference type="EMBL" id="CU329670">
    <property type="protein sequence ID" value="CAB61778.1"/>
    <property type="molecule type" value="Genomic_DNA"/>
</dbReference>
<dbReference type="PIR" id="T50199">
    <property type="entry name" value="T50199"/>
</dbReference>
<dbReference type="RefSeq" id="NP_594472.1">
    <property type="nucleotide sequence ID" value="NM_001019901.2"/>
</dbReference>
<dbReference type="SMR" id="Q9UTA6"/>
<dbReference type="BioGRID" id="278147">
    <property type="interactions" value="5"/>
</dbReference>
<dbReference type="FunCoup" id="Q9UTA6">
    <property type="interactions" value="414"/>
</dbReference>
<dbReference type="STRING" id="284812.Q9UTA6"/>
<dbReference type="iPTMnet" id="Q9UTA6"/>
<dbReference type="PaxDb" id="4896-SPAC25B8.12c.1"/>
<dbReference type="EnsemblFungi" id="SPAC25B8.12c.1">
    <property type="protein sequence ID" value="SPAC25B8.12c.1:pep"/>
    <property type="gene ID" value="SPAC25B8.12c"/>
</dbReference>
<dbReference type="KEGG" id="spo:2541651"/>
<dbReference type="PomBase" id="SPAC25B8.12c"/>
<dbReference type="VEuPathDB" id="FungiDB:SPAC25B8.12c"/>
<dbReference type="eggNOG" id="ENOG502QUN8">
    <property type="taxonomic scope" value="Eukaryota"/>
</dbReference>
<dbReference type="HOGENOM" id="CLU_044146_3_1_1"/>
<dbReference type="InParanoid" id="Q9UTA6"/>
<dbReference type="OMA" id="MAVCEDP"/>
<dbReference type="PhylomeDB" id="Q9UTA6"/>
<dbReference type="PRO" id="PR:Q9UTA6"/>
<dbReference type="Proteomes" id="UP000002485">
    <property type="component" value="Chromosome I"/>
</dbReference>
<dbReference type="GO" id="GO:0005829">
    <property type="term" value="C:cytosol"/>
    <property type="evidence" value="ECO:0007005"/>
    <property type="project" value="PomBase"/>
</dbReference>
<dbReference type="GO" id="GO:0005634">
    <property type="term" value="C:nucleus"/>
    <property type="evidence" value="ECO:0007005"/>
    <property type="project" value="PomBase"/>
</dbReference>
<dbReference type="GO" id="GO:0000287">
    <property type="term" value="F:magnesium ion binding"/>
    <property type="evidence" value="ECO:0000318"/>
    <property type="project" value="GO_Central"/>
</dbReference>
<dbReference type="GO" id="GO:0016791">
    <property type="term" value="F:phosphatase activity"/>
    <property type="evidence" value="ECO:0000318"/>
    <property type="project" value="GO_Central"/>
</dbReference>
<dbReference type="Gene3D" id="3.30.1240.10">
    <property type="match status" value="1"/>
</dbReference>
<dbReference type="Gene3D" id="3.40.50.1000">
    <property type="entry name" value="HAD superfamily/HAD-like"/>
    <property type="match status" value="1"/>
</dbReference>
<dbReference type="InterPro" id="IPR036412">
    <property type="entry name" value="HAD-like_sf"/>
</dbReference>
<dbReference type="InterPro" id="IPR006379">
    <property type="entry name" value="HAD-SF_hydro_IIB"/>
</dbReference>
<dbReference type="InterPro" id="IPR023214">
    <property type="entry name" value="HAD_sf"/>
</dbReference>
<dbReference type="NCBIfam" id="TIGR01484">
    <property type="entry name" value="HAD-SF-IIB"/>
    <property type="match status" value="1"/>
</dbReference>
<dbReference type="PANTHER" id="PTHR10000:SF8">
    <property type="entry name" value="HAD SUPERFAMILY HYDROLASE-LIKE, TYPE 3"/>
    <property type="match status" value="1"/>
</dbReference>
<dbReference type="PANTHER" id="PTHR10000">
    <property type="entry name" value="PHOSPHOSERINE PHOSPHATASE"/>
    <property type="match status" value="1"/>
</dbReference>
<dbReference type="Pfam" id="PF08282">
    <property type="entry name" value="Hydrolase_3"/>
    <property type="match status" value="1"/>
</dbReference>
<dbReference type="SUPFAM" id="SSF56784">
    <property type="entry name" value="HAD-like"/>
    <property type="match status" value="1"/>
</dbReference>